<gene>
    <name evidence="1" type="primary">pgi</name>
    <name type="ordered locus">Cag_0612</name>
</gene>
<accession>Q3ASZ0</accession>
<name>G6PI_CHLCH</name>
<dbReference type="EC" id="5.3.1.9" evidence="1"/>
<dbReference type="EMBL" id="CP000108">
    <property type="protein sequence ID" value="ABB27885.1"/>
    <property type="molecule type" value="Genomic_DNA"/>
</dbReference>
<dbReference type="SMR" id="Q3ASZ0"/>
<dbReference type="STRING" id="340177.Cag_0612"/>
<dbReference type="KEGG" id="cch:Cag_0612"/>
<dbReference type="eggNOG" id="COG0166">
    <property type="taxonomic scope" value="Bacteria"/>
</dbReference>
<dbReference type="HOGENOM" id="CLU_017947_3_1_10"/>
<dbReference type="OrthoDB" id="140919at2"/>
<dbReference type="UniPathway" id="UPA00109">
    <property type="reaction ID" value="UER00181"/>
</dbReference>
<dbReference type="UniPathway" id="UPA00138"/>
<dbReference type="GO" id="GO:0005829">
    <property type="term" value="C:cytosol"/>
    <property type="evidence" value="ECO:0007669"/>
    <property type="project" value="TreeGrafter"/>
</dbReference>
<dbReference type="GO" id="GO:0097367">
    <property type="term" value="F:carbohydrate derivative binding"/>
    <property type="evidence" value="ECO:0007669"/>
    <property type="project" value="InterPro"/>
</dbReference>
<dbReference type="GO" id="GO:0004347">
    <property type="term" value="F:glucose-6-phosphate isomerase activity"/>
    <property type="evidence" value="ECO:0007669"/>
    <property type="project" value="UniProtKB-UniRule"/>
</dbReference>
<dbReference type="GO" id="GO:0048029">
    <property type="term" value="F:monosaccharide binding"/>
    <property type="evidence" value="ECO:0007669"/>
    <property type="project" value="TreeGrafter"/>
</dbReference>
<dbReference type="GO" id="GO:0006094">
    <property type="term" value="P:gluconeogenesis"/>
    <property type="evidence" value="ECO:0007669"/>
    <property type="project" value="UniProtKB-UniRule"/>
</dbReference>
<dbReference type="GO" id="GO:0051156">
    <property type="term" value="P:glucose 6-phosphate metabolic process"/>
    <property type="evidence" value="ECO:0007669"/>
    <property type="project" value="TreeGrafter"/>
</dbReference>
<dbReference type="GO" id="GO:0006096">
    <property type="term" value="P:glycolytic process"/>
    <property type="evidence" value="ECO:0007669"/>
    <property type="project" value="UniProtKB-UniRule"/>
</dbReference>
<dbReference type="CDD" id="cd05015">
    <property type="entry name" value="SIS_PGI_1"/>
    <property type="match status" value="1"/>
</dbReference>
<dbReference type="CDD" id="cd05016">
    <property type="entry name" value="SIS_PGI_2"/>
    <property type="match status" value="1"/>
</dbReference>
<dbReference type="FunFam" id="1.10.1390.10:FF:000001">
    <property type="entry name" value="Glucose-6-phosphate isomerase"/>
    <property type="match status" value="1"/>
</dbReference>
<dbReference type="FunFam" id="3.40.50.10490:FF:000004">
    <property type="entry name" value="Glucose-6-phosphate isomerase"/>
    <property type="match status" value="1"/>
</dbReference>
<dbReference type="Gene3D" id="1.10.1390.10">
    <property type="match status" value="1"/>
</dbReference>
<dbReference type="Gene3D" id="3.40.50.10490">
    <property type="entry name" value="Glucose-6-phosphate isomerase like protein, domain 1"/>
    <property type="match status" value="2"/>
</dbReference>
<dbReference type="HAMAP" id="MF_00473">
    <property type="entry name" value="G6P_isomerase"/>
    <property type="match status" value="1"/>
</dbReference>
<dbReference type="InterPro" id="IPR001672">
    <property type="entry name" value="G6P_Isomerase"/>
</dbReference>
<dbReference type="InterPro" id="IPR023096">
    <property type="entry name" value="G6P_Isomerase_C"/>
</dbReference>
<dbReference type="InterPro" id="IPR018189">
    <property type="entry name" value="Phosphoglucose_isomerase_CS"/>
</dbReference>
<dbReference type="InterPro" id="IPR046348">
    <property type="entry name" value="SIS_dom_sf"/>
</dbReference>
<dbReference type="InterPro" id="IPR035476">
    <property type="entry name" value="SIS_PGI_1"/>
</dbReference>
<dbReference type="InterPro" id="IPR035482">
    <property type="entry name" value="SIS_PGI_2"/>
</dbReference>
<dbReference type="NCBIfam" id="NF001211">
    <property type="entry name" value="PRK00179.1"/>
    <property type="match status" value="1"/>
</dbReference>
<dbReference type="PANTHER" id="PTHR11469">
    <property type="entry name" value="GLUCOSE-6-PHOSPHATE ISOMERASE"/>
    <property type="match status" value="1"/>
</dbReference>
<dbReference type="PANTHER" id="PTHR11469:SF1">
    <property type="entry name" value="GLUCOSE-6-PHOSPHATE ISOMERASE"/>
    <property type="match status" value="1"/>
</dbReference>
<dbReference type="Pfam" id="PF00342">
    <property type="entry name" value="PGI"/>
    <property type="match status" value="1"/>
</dbReference>
<dbReference type="PRINTS" id="PR00662">
    <property type="entry name" value="G6PISOMERASE"/>
</dbReference>
<dbReference type="SUPFAM" id="SSF53697">
    <property type="entry name" value="SIS domain"/>
    <property type="match status" value="1"/>
</dbReference>
<dbReference type="PROSITE" id="PS00765">
    <property type="entry name" value="P_GLUCOSE_ISOMERASE_1"/>
    <property type="match status" value="1"/>
</dbReference>
<dbReference type="PROSITE" id="PS00174">
    <property type="entry name" value="P_GLUCOSE_ISOMERASE_2"/>
    <property type="match status" value="1"/>
</dbReference>
<dbReference type="PROSITE" id="PS51463">
    <property type="entry name" value="P_GLUCOSE_ISOMERASE_3"/>
    <property type="match status" value="1"/>
</dbReference>
<keyword id="KW-0963">Cytoplasm</keyword>
<keyword id="KW-0312">Gluconeogenesis</keyword>
<keyword id="KW-0324">Glycolysis</keyword>
<keyword id="KW-0413">Isomerase</keyword>
<proteinExistence type="inferred from homology"/>
<sequence>MASRVESAAWRALQAHQQEIAPLQMRQLFAEDSARFERFSLRWQGMLCDYSKHRITARTMELLLDLARSAEIEAARNAMMQGQPINLTEKRAVLHTALRKPQSVPFAVDGQNVAADVAEVLAQMEGCCNRIISGEWVGYTGKAMTDIVNIGIGGSDLGPYMVTEALRPFAHGKLNVHFVSNVDGTHLSETLKKLNPETTLFIVASKTFTTQETLSNAMSARAWFLQCAVDAAHIAKHFVAVSTNRAKVVEFGIDEANMFRFWDWVGGRYSLWSSIGLSIAMYLGFEKFRQLLAGAYAMDEHFCSAPLESNMPVIMAMLGIWYSNFFGCTSHAVIPYDQYLHRFPAYLQQLDMESNGKRVTRDGTVVDYATGAVIWGEPGTNSQHAFFQLLHQGTQIIPADFILPLKTQNPIGAHHDMLASNCFAQTEALMKGKSEEEVERELVAAGADAATIAALLPHKVFPGNRPTTTLLLDELNPFTLGSLIALYEHKVFVQGIVWNINSFDQWGVELGKQLANVILPELQASSNAAAHDSSTNALINAYRAQRYC</sequence>
<protein>
    <recommendedName>
        <fullName evidence="1">Glucose-6-phosphate isomerase</fullName>
        <shortName evidence="1">GPI</shortName>
        <ecNumber evidence="1">5.3.1.9</ecNumber>
    </recommendedName>
    <alternativeName>
        <fullName evidence="1">Phosphoglucose isomerase</fullName>
        <shortName evidence="1">PGI</shortName>
    </alternativeName>
    <alternativeName>
        <fullName evidence="1">Phosphohexose isomerase</fullName>
        <shortName evidence="1">PHI</shortName>
    </alternativeName>
</protein>
<feature type="chain" id="PRO_0000230917" description="Glucose-6-phosphate isomerase">
    <location>
        <begin position="1"/>
        <end position="548"/>
    </location>
</feature>
<feature type="active site" description="Proton donor" evidence="1">
    <location>
        <position position="353"/>
    </location>
</feature>
<feature type="active site" evidence="1">
    <location>
        <position position="384"/>
    </location>
</feature>
<feature type="active site" evidence="1">
    <location>
        <position position="512"/>
    </location>
</feature>
<evidence type="ECO:0000255" key="1">
    <source>
        <dbReference type="HAMAP-Rule" id="MF_00473"/>
    </source>
</evidence>
<organism>
    <name type="scientific">Chlorobium chlorochromatii (strain CaD3)</name>
    <dbReference type="NCBI Taxonomy" id="340177"/>
    <lineage>
        <taxon>Bacteria</taxon>
        <taxon>Pseudomonadati</taxon>
        <taxon>Chlorobiota</taxon>
        <taxon>Chlorobiia</taxon>
        <taxon>Chlorobiales</taxon>
        <taxon>Chlorobiaceae</taxon>
        <taxon>Chlorobium/Pelodictyon group</taxon>
        <taxon>Chlorobium</taxon>
    </lineage>
</organism>
<reference key="1">
    <citation type="submission" date="2005-08" db="EMBL/GenBank/DDBJ databases">
        <title>Complete sequence of Chlorobium chlorochromatii CaD3.</title>
        <authorList>
            <consortium name="US DOE Joint Genome Institute"/>
            <person name="Copeland A."/>
            <person name="Lucas S."/>
            <person name="Lapidus A."/>
            <person name="Barry K."/>
            <person name="Detter J.C."/>
            <person name="Glavina T."/>
            <person name="Hammon N."/>
            <person name="Israni S."/>
            <person name="Pitluck S."/>
            <person name="Bryant D."/>
            <person name="Schmutz J."/>
            <person name="Larimer F."/>
            <person name="Land M."/>
            <person name="Kyrpides N."/>
            <person name="Ivanova N."/>
            <person name="Richardson P."/>
        </authorList>
    </citation>
    <scope>NUCLEOTIDE SEQUENCE [LARGE SCALE GENOMIC DNA]</scope>
    <source>
        <strain>CaD3</strain>
    </source>
</reference>
<comment type="function">
    <text evidence="1">Catalyzes the reversible isomerization of glucose-6-phosphate to fructose-6-phosphate.</text>
</comment>
<comment type="catalytic activity">
    <reaction evidence="1">
        <text>alpha-D-glucose 6-phosphate = beta-D-fructose 6-phosphate</text>
        <dbReference type="Rhea" id="RHEA:11816"/>
        <dbReference type="ChEBI" id="CHEBI:57634"/>
        <dbReference type="ChEBI" id="CHEBI:58225"/>
        <dbReference type="EC" id="5.3.1.9"/>
    </reaction>
</comment>
<comment type="pathway">
    <text evidence="1">Carbohydrate biosynthesis; gluconeogenesis.</text>
</comment>
<comment type="pathway">
    <text evidence="1">Carbohydrate degradation; glycolysis; D-glyceraldehyde 3-phosphate and glycerone phosphate from D-glucose: step 2/4.</text>
</comment>
<comment type="subcellular location">
    <subcellularLocation>
        <location evidence="1">Cytoplasm</location>
    </subcellularLocation>
</comment>
<comment type="similarity">
    <text evidence="1">Belongs to the GPI family.</text>
</comment>